<accession>P57349</accession>
<evidence type="ECO:0000255" key="1">
    <source>
        <dbReference type="HAMAP-Rule" id="MF_00144"/>
    </source>
</evidence>
<evidence type="ECO:0000305" key="2"/>
<proteinExistence type="inferred from homology"/>
<protein>
    <recommendedName>
        <fullName evidence="1">tRNA-specific 2-thiouridylase MnmA</fullName>
        <ecNumber evidence="1">2.8.1.13</ecNumber>
    </recommendedName>
</protein>
<dbReference type="EC" id="2.8.1.13" evidence="1"/>
<dbReference type="EMBL" id="BA000003">
    <property type="protein sequence ID" value="BAB12971.1"/>
    <property type="status" value="ALT_INIT"/>
    <property type="molecule type" value="Genomic_DNA"/>
</dbReference>
<dbReference type="RefSeq" id="NP_240085.2">
    <property type="nucleotide sequence ID" value="NC_002528.1"/>
</dbReference>
<dbReference type="RefSeq" id="WP_010896031.1">
    <property type="nucleotide sequence ID" value="NC_002528.1"/>
</dbReference>
<dbReference type="SMR" id="P57349"/>
<dbReference type="STRING" id="563178.BUAP5A_256"/>
<dbReference type="EnsemblBacteria" id="BAB12971">
    <property type="protein sequence ID" value="BAB12971"/>
    <property type="gene ID" value="BAB12971"/>
</dbReference>
<dbReference type="KEGG" id="buc:BU261"/>
<dbReference type="PATRIC" id="fig|107806.10.peg.271"/>
<dbReference type="eggNOG" id="COG0482">
    <property type="taxonomic scope" value="Bacteria"/>
</dbReference>
<dbReference type="HOGENOM" id="CLU_035188_1_0_6"/>
<dbReference type="Proteomes" id="UP000001806">
    <property type="component" value="Chromosome"/>
</dbReference>
<dbReference type="GO" id="GO:0005737">
    <property type="term" value="C:cytoplasm"/>
    <property type="evidence" value="ECO:0007669"/>
    <property type="project" value="UniProtKB-SubCell"/>
</dbReference>
<dbReference type="GO" id="GO:0005524">
    <property type="term" value="F:ATP binding"/>
    <property type="evidence" value="ECO:0007669"/>
    <property type="project" value="UniProtKB-KW"/>
</dbReference>
<dbReference type="GO" id="GO:0000049">
    <property type="term" value="F:tRNA binding"/>
    <property type="evidence" value="ECO:0007669"/>
    <property type="project" value="UniProtKB-KW"/>
</dbReference>
<dbReference type="GO" id="GO:0103016">
    <property type="term" value="F:tRNA-uridine 2-sulfurtransferase activity"/>
    <property type="evidence" value="ECO:0007669"/>
    <property type="project" value="UniProtKB-EC"/>
</dbReference>
<dbReference type="GO" id="GO:0002143">
    <property type="term" value="P:tRNA wobble position uridine thiolation"/>
    <property type="evidence" value="ECO:0007669"/>
    <property type="project" value="TreeGrafter"/>
</dbReference>
<dbReference type="CDD" id="cd01998">
    <property type="entry name" value="MnmA_TRMU-like"/>
    <property type="match status" value="1"/>
</dbReference>
<dbReference type="FunFam" id="2.30.30.280:FF:000001">
    <property type="entry name" value="tRNA-specific 2-thiouridylase MnmA"/>
    <property type="match status" value="1"/>
</dbReference>
<dbReference type="FunFam" id="2.40.30.10:FF:000023">
    <property type="entry name" value="tRNA-specific 2-thiouridylase MnmA"/>
    <property type="match status" value="1"/>
</dbReference>
<dbReference type="FunFam" id="3.40.50.620:FF:000004">
    <property type="entry name" value="tRNA-specific 2-thiouridylase MnmA"/>
    <property type="match status" value="1"/>
</dbReference>
<dbReference type="Gene3D" id="2.30.30.280">
    <property type="entry name" value="Adenine nucleotide alpha hydrolases-like domains"/>
    <property type="match status" value="1"/>
</dbReference>
<dbReference type="Gene3D" id="3.40.50.620">
    <property type="entry name" value="HUPs"/>
    <property type="match status" value="1"/>
</dbReference>
<dbReference type="Gene3D" id="2.40.30.10">
    <property type="entry name" value="Translation factors"/>
    <property type="match status" value="1"/>
</dbReference>
<dbReference type="HAMAP" id="MF_00144">
    <property type="entry name" value="tRNA_thiouridyl_MnmA"/>
    <property type="match status" value="1"/>
</dbReference>
<dbReference type="InterPro" id="IPR004506">
    <property type="entry name" value="MnmA-like"/>
</dbReference>
<dbReference type="InterPro" id="IPR046885">
    <property type="entry name" value="MnmA-like_C"/>
</dbReference>
<dbReference type="InterPro" id="IPR046884">
    <property type="entry name" value="MnmA-like_central"/>
</dbReference>
<dbReference type="InterPro" id="IPR023382">
    <property type="entry name" value="MnmA-like_central_sf"/>
</dbReference>
<dbReference type="InterPro" id="IPR014729">
    <property type="entry name" value="Rossmann-like_a/b/a_fold"/>
</dbReference>
<dbReference type="NCBIfam" id="NF001138">
    <property type="entry name" value="PRK00143.1"/>
    <property type="match status" value="1"/>
</dbReference>
<dbReference type="NCBIfam" id="TIGR00420">
    <property type="entry name" value="trmU"/>
    <property type="match status" value="1"/>
</dbReference>
<dbReference type="PANTHER" id="PTHR11933:SF5">
    <property type="entry name" value="MITOCHONDRIAL TRNA-SPECIFIC 2-THIOURIDYLASE 1"/>
    <property type="match status" value="1"/>
</dbReference>
<dbReference type="PANTHER" id="PTHR11933">
    <property type="entry name" value="TRNA 5-METHYLAMINOMETHYL-2-THIOURIDYLATE -METHYLTRANSFERASE"/>
    <property type="match status" value="1"/>
</dbReference>
<dbReference type="Pfam" id="PF03054">
    <property type="entry name" value="tRNA_Me_trans"/>
    <property type="match status" value="1"/>
</dbReference>
<dbReference type="Pfam" id="PF20258">
    <property type="entry name" value="tRNA_Me_trans_C"/>
    <property type="match status" value="1"/>
</dbReference>
<dbReference type="Pfam" id="PF20259">
    <property type="entry name" value="tRNA_Me_trans_M"/>
    <property type="match status" value="1"/>
</dbReference>
<dbReference type="SUPFAM" id="SSF52402">
    <property type="entry name" value="Adenine nucleotide alpha hydrolases-like"/>
    <property type="match status" value="1"/>
</dbReference>
<comment type="function">
    <text evidence="1">Catalyzes the 2-thiolation of uridine at the wobble position (U34) of tRNA(Lys), tRNA(Glu) and tRNA(Gln), leading to the formation of s(2)U34, the first step of tRNA-mnm(5)s(2)U34 synthesis. Sulfur is provided by IscS, via a sulfur-relay system. Binds ATP and its substrate tRNAs.</text>
</comment>
<comment type="catalytic activity">
    <reaction evidence="1">
        <text>S-sulfanyl-L-cysteinyl-[protein] + uridine(34) in tRNA + AH2 + ATP = 2-thiouridine(34) in tRNA + L-cysteinyl-[protein] + A + AMP + diphosphate + H(+)</text>
        <dbReference type="Rhea" id="RHEA:47032"/>
        <dbReference type="Rhea" id="RHEA-COMP:10131"/>
        <dbReference type="Rhea" id="RHEA-COMP:11726"/>
        <dbReference type="Rhea" id="RHEA-COMP:11727"/>
        <dbReference type="Rhea" id="RHEA-COMP:11728"/>
        <dbReference type="ChEBI" id="CHEBI:13193"/>
        <dbReference type="ChEBI" id="CHEBI:15378"/>
        <dbReference type="ChEBI" id="CHEBI:17499"/>
        <dbReference type="ChEBI" id="CHEBI:29950"/>
        <dbReference type="ChEBI" id="CHEBI:30616"/>
        <dbReference type="ChEBI" id="CHEBI:33019"/>
        <dbReference type="ChEBI" id="CHEBI:61963"/>
        <dbReference type="ChEBI" id="CHEBI:65315"/>
        <dbReference type="ChEBI" id="CHEBI:87170"/>
        <dbReference type="ChEBI" id="CHEBI:456215"/>
        <dbReference type="EC" id="2.8.1.13"/>
    </reaction>
</comment>
<comment type="subunit">
    <text evidence="1">Interacts with TusE.</text>
</comment>
<comment type="subcellular location">
    <subcellularLocation>
        <location evidence="1">Cytoplasm</location>
    </subcellularLocation>
</comment>
<comment type="similarity">
    <text evidence="1">Belongs to the MnmA/TRMU family.</text>
</comment>
<comment type="sequence caution" evidence="2">
    <conflict type="erroneous initiation">
        <sequence resource="EMBL-CDS" id="BAB12971"/>
    </conflict>
</comment>
<organism>
    <name type="scientific">Buchnera aphidicola subsp. Acyrthosiphon pisum (strain APS)</name>
    <name type="common">Acyrthosiphon pisum symbiotic bacterium</name>
    <dbReference type="NCBI Taxonomy" id="107806"/>
    <lineage>
        <taxon>Bacteria</taxon>
        <taxon>Pseudomonadati</taxon>
        <taxon>Pseudomonadota</taxon>
        <taxon>Gammaproteobacteria</taxon>
        <taxon>Enterobacterales</taxon>
        <taxon>Erwiniaceae</taxon>
        <taxon>Buchnera</taxon>
    </lineage>
</organism>
<keyword id="KW-0067">ATP-binding</keyword>
<keyword id="KW-0963">Cytoplasm</keyword>
<keyword id="KW-1015">Disulfide bond</keyword>
<keyword id="KW-0547">Nucleotide-binding</keyword>
<keyword id="KW-1185">Reference proteome</keyword>
<keyword id="KW-0694">RNA-binding</keyword>
<keyword id="KW-0808">Transferase</keyword>
<keyword id="KW-0819">tRNA processing</keyword>
<keyword id="KW-0820">tRNA-binding</keyword>
<reference key="1">
    <citation type="journal article" date="2000" name="Nature">
        <title>Genome sequence of the endocellular bacterial symbiont of aphids Buchnera sp. APS.</title>
        <authorList>
            <person name="Shigenobu S."/>
            <person name="Watanabe H."/>
            <person name="Hattori M."/>
            <person name="Sakaki Y."/>
            <person name="Ishikawa H."/>
        </authorList>
    </citation>
    <scope>NUCLEOTIDE SEQUENCE [LARGE SCALE GENOMIC DNA]</scope>
    <source>
        <strain>APS</strain>
    </source>
</reference>
<gene>
    <name evidence="1" type="primary">mnmA</name>
    <name type="synonym">trmU</name>
    <name type="ordered locus">BU261</name>
</gene>
<sequence length="368" mass="42225">MIIKKNKKIIVAMSGGVDSSVCAWILKKQNYQVEGLFMKNWEEDDQEGYCSSTKDLLDAENICKKLNIYLHKMNFSSEYWEYVFENFLKEYKKGNTPNPDILCNKEIKFNMFLNYSIQELKADYIATGHYARIKKINGKYLLLKGIDTNKDQSYFLYTLNSIQLRKILFPIGHLKKNKVRNIAKKIDLKIAKKKDSTGICFIGPKKLKNFLSLYISEKKGDIVTISGRVIGKHSGVFYYTIGQRQGLGIGGIKGEYNIPWYVVEKNIEKNILIVAQGSYNKHLMSIGLIAKNINWINYDQLSFPLSCMAKTRYRQKDIICKIEYINNHHIKILFDCPVAAVTPGQSVVFYVSDICIGGGIIESRLPLL</sequence>
<feature type="chain" id="PRO_0000121615" description="tRNA-specific 2-thiouridylase MnmA">
    <location>
        <begin position="1"/>
        <end position="368"/>
    </location>
</feature>
<feature type="region of interest" description="Interaction with target base in tRNA" evidence="1">
    <location>
        <begin position="98"/>
        <end position="100"/>
    </location>
</feature>
<feature type="region of interest" description="Interaction with tRNA" evidence="1">
    <location>
        <begin position="150"/>
        <end position="152"/>
    </location>
</feature>
<feature type="region of interest" description="Interaction with tRNA" evidence="1">
    <location>
        <begin position="312"/>
        <end position="313"/>
    </location>
</feature>
<feature type="active site" description="Nucleophile" evidence="1">
    <location>
        <position position="103"/>
    </location>
</feature>
<feature type="active site" description="Cysteine persulfide intermediate" evidence="1">
    <location>
        <position position="200"/>
    </location>
</feature>
<feature type="binding site" evidence="1">
    <location>
        <begin position="12"/>
        <end position="19"/>
    </location>
    <ligand>
        <name>ATP</name>
        <dbReference type="ChEBI" id="CHEBI:30616"/>
    </ligand>
</feature>
<feature type="binding site" evidence="1">
    <location>
        <position position="38"/>
    </location>
    <ligand>
        <name>ATP</name>
        <dbReference type="ChEBI" id="CHEBI:30616"/>
    </ligand>
</feature>
<feature type="binding site" evidence="1">
    <location>
        <position position="128"/>
    </location>
    <ligand>
        <name>ATP</name>
        <dbReference type="ChEBI" id="CHEBI:30616"/>
    </ligand>
</feature>
<feature type="site" description="Interaction with tRNA" evidence="1">
    <location>
        <position position="129"/>
    </location>
</feature>
<feature type="site" description="Interaction with tRNA" evidence="1">
    <location>
        <position position="345"/>
    </location>
</feature>
<feature type="disulfide bond" description="Alternate" evidence="1">
    <location>
        <begin position="103"/>
        <end position="200"/>
    </location>
</feature>
<name>MNMA_BUCAI</name>